<gene>
    <name evidence="1" type="primary">dut</name>
    <name type="ordered locus">HS_0142</name>
</gene>
<protein>
    <recommendedName>
        <fullName evidence="1">Deoxyuridine 5'-triphosphate nucleotidohydrolase</fullName>
        <shortName evidence="1">dUTPase</shortName>
        <ecNumber evidence="1">3.6.1.23</ecNumber>
    </recommendedName>
    <alternativeName>
        <fullName evidence="1">dUTP pyrophosphatase</fullName>
    </alternativeName>
</protein>
<organism>
    <name type="scientific">Histophilus somni (strain 129Pt)</name>
    <name type="common">Haemophilus somnus</name>
    <dbReference type="NCBI Taxonomy" id="205914"/>
    <lineage>
        <taxon>Bacteria</taxon>
        <taxon>Pseudomonadati</taxon>
        <taxon>Pseudomonadota</taxon>
        <taxon>Gammaproteobacteria</taxon>
        <taxon>Pasteurellales</taxon>
        <taxon>Pasteurellaceae</taxon>
        <taxon>Histophilus</taxon>
    </lineage>
</organism>
<name>DUT_HISS1</name>
<keyword id="KW-0378">Hydrolase</keyword>
<keyword id="KW-0460">Magnesium</keyword>
<keyword id="KW-0479">Metal-binding</keyword>
<keyword id="KW-0546">Nucleotide metabolism</keyword>
<sequence length="151" mass="16346">MKKIDVKILDPRIGTEFPLPTYATIGSAGLDLRALVDEGFEVQPGETKLISTGLSIYIADPNLAAVILPRSGLGHKNGIVLGNLVGLIDSDYQGPLMVSLWNRSDKPFKIEIGDRIAQLVFVPVVQAEFNIVEEFQQTDRGNGGFGHSGKK</sequence>
<reference key="1">
    <citation type="journal article" date="2007" name="J. Bacteriol.">
        <title>Complete genome sequence of Haemophilus somnus (Histophilus somni) strain 129Pt and comparison to Haemophilus ducreyi 35000HP and Haemophilus influenzae Rd.</title>
        <authorList>
            <person name="Challacombe J.F."/>
            <person name="Duncan A.J."/>
            <person name="Brettin T.S."/>
            <person name="Bruce D."/>
            <person name="Chertkov O."/>
            <person name="Detter J.C."/>
            <person name="Han C.S."/>
            <person name="Misra M."/>
            <person name="Richardson P."/>
            <person name="Tapia R."/>
            <person name="Thayer N."/>
            <person name="Xie G."/>
            <person name="Inzana T.J."/>
        </authorList>
    </citation>
    <scope>NUCLEOTIDE SEQUENCE [LARGE SCALE GENOMIC DNA]</scope>
    <source>
        <strain>129Pt</strain>
    </source>
</reference>
<feature type="chain" id="PRO_1000015475" description="Deoxyuridine 5'-triphosphate nucleotidohydrolase">
    <location>
        <begin position="1"/>
        <end position="151"/>
    </location>
</feature>
<feature type="binding site" evidence="1">
    <location>
        <begin position="70"/>
        <end position="72"/>
    </location>
    <ligand>
        <name>substrate</name>
    </ligand>
</feature>
<feature type="binding site" evidence="1">
    <location>
        <position position="83"/>
    </location>
    <ligand>
        <name>substrate</name>
    </ligand>
</feature>
<feature type="binding site" evidence="1">
    <location>
        <begin position="87"/>
        <end position="89"/>
    </location>
    <ligand>
        <name>substrate</name>
    </ligand>
</feature>
<feature type="binding site" evidence="1">
    <location>
        <position position="97"/>
    </location>
    <ligand>
        <name>substrate</name>
    </ligand>
</feature>
<comment type="function">
    <text evidence="1">This enzyme is involved in nucleotide metabolism: it produces dUMP, the immediate precursor of thymidine nucleotides and it decreases the intracellular concentration of dUTP so that uracil cannot be incorporated into DNA.</text>
</comment>
<comment type="catalytic activity">
    <reaction evidence="1">
        <text>dUTP + H2O = dUMP + diphosphate + H(+)</text>
        <dbReference type="Rhea" id="RHEA:10248"/>
        <dbReference type="ChEBI" id="CHEBI:15377"/>
        <dbReference type="ChEBI" id="CHEBI:15378"/>
        <dbReference type="ChEBI" id="CHEBI:33019"/>
        <dbReference type="ChEBI" id="CHEBI:61555"/>
        <dbReference type="ChEBI" id="CHEBI:246422"/>
        <dbReference type="EC" id="3.6.1.23"/>
    </reaction>
</comment>
<comment type="cofactor">
    <cofactor evidence="1">
        <name>Mg(2+)</name>
        <dbReference type="ChEBI" id="CHEBI:18420"/>
    </cofactor>
</comment>
<comment type="pathway">
    <text evidence="1">Pyrimidine metabolism; dUMP biosynthesis; dUMP from dCTP (dUTP route): step 2/2.</text>
</comment>
<comment type="similarity">
    <text evidence="1">Belongs to the dUTPase family.</text>
</comment>
<dbReference type="EC" id="3.6.1.23" evidence="1"/>
<dbReference type="EMBL" id="CP000436">
    <property type="protein sequence ID" value="ABI24420.1"/>
    <property type="molecule type" value="Genomic_DNA"/>
</dbReference>
<dbReference type="SMR" id="Q0I0Y1"/>
<dbReference type="KEGG" id="hso:HS_0142"/>
<dbReference type="eggNOG" id="COG0756">
    <property type="taxonomic scope" value="Bacteria"/>
</dbReference>
<dbReference type="HOGENOM" id="CLU_068508_1_1_6"/>
<dbReference type="UniPathway" id="UPA00610">
    <property type="reaction ID" value="UER00666"/>
</dbReference>
<dbReference type="GO" id="GO:0004170">
    <property type="term" value="F:dUTP diphosphatase activity"/>
    <property type="evidence" value="ECO:0007669"/>
    <property type="project" value="UniProtKB-UniRule"/>
</dbReference>
<dbReference type="GO" id="GO:0000287">
    <property type="term" value="F:magnesium ion binding"/>
    <property type="evidence" value="ECO:0007669"/>
    <property type="project" value="UniProtKB-UniRule"/>
</dbReference>
<dbReference type="GO" id="GO:0006226">
    <property type="term" value="P:dUMP biosynthetic process"/>
    <property type="evidence" value="ECO:0007669"/>
    <property type="project" value="UniProtKB-UniRule"/>
</dbReference>
<dbReference type="GO" id="GO:0046081">
    <property type="term" value="P:dUTP catabolic process"/>
    <property type="evidence" value="ECO:0007669"/>
    <property type="project" value="InterPro"/>
</dbReference>
<dbReference type="CDD" id="cd07557">
    <property type="entry name" value="trimeric_dUTPase"/>
    <property type="match status" value="1"/>
</dbReference>
<dbReference type="FunFam" id="2.70.40.10:FF:000002">
    <property type="entry name" value="dUTP diphosphatase"/>
    <property type="match status" value="1"/>
</dbReference>
<dbReference type="Gene3D" id="2.70.40.10">
    <property type="match status" value="1"/>
</dbReference>
<dbReference type="HAMAP" id="MF_00116">
    <property type="entry name" value="dUTPase_bact"/>
    <property type="match status" value="1"/>
</dbReference>
<dbReference type="InterPro" id="IPR008181">
    <property type="entry name" value="dUTPase"/>
</dbReference>
<dbReference type="InterPro" id="IPR029054">
    <property type="entry name" value="dUTPase-like"/>
</dbReference>
<dbReference type="InterPro" id="IPR036157">
    <property type="entry name" value="dUTPase-like_sf"/>
</dbReference>
<dbReference type="InterPro" id="IPR033704">
    <property type="entry name" value="dUTPase_trimeric"/>
</dbReference>
<dbReference type="NCBIfam" id="TIGR00576">
    <property type="entry name" value="dut"/>
    <property type="match status" value="1"/>
</dbReference>
<dbReference type="NCBIfam" id="NF001862">
    <property type="entry name" value="PRK00601.1"/>
    <property type="match status" value="1"/>
</dbReference>
<dbReference type="PANTHER" id="PTHR11241">
    <property type="entry name" value="DEOXYURIDINE 5'-TRIPHOSPHATE NUCLEOTIDOHYDROLASE"/>
    <property type="match status" value="1"/>
</dbReference>
<dbReference type="PANTHER" id="PTHR11241:SF0">
    <property type="entry name" value="DEOXYURIDINE 5'-TRIPHOSPHATE NUCLEOTIDOHYDROLASE"/>
    <property type="match status" value="1"/>
</dbReference>
<dbReference type="Pfam" id="PF00692">
    <property type="entry name" value="dUTPase"/>
    <property type="match status" value="1"/>
</dbReference>
<dbReference type="SUPFAM" id="SSF51283">
    <property type="entry name" value="dUTPase-like"/>
    <property type="match status" value="1"/>
</dbReference>
<evidence type="ECO:0000255" key="1">
    <source>
        <dbReference type="HAMAP-Rule" id="MF_00116"/>
    </source>
</evidence>
<proteinExistence type="inferred from homology"/>
<accession>Q0I0Y1</accession>